<keyword id="KW-0186">Copper</keyword>
<keyword id="KW-0187">Copper transport</keyword>
<keyword id="KW-0406">Ion transport</keyword>
<keyword id="KW-0472">Membrane</keyword>
<keyword id="KW-1185">Reference proteome</keyword>
<keyword id="KW-0812">Transmembrane</keyword>
<keyword id="KW-1133">Transmembrane helix</keyword>
<keyword id="KW-0813">Transport</keyword>
<sequence length="145" mass="16103">MLSSKNVVVVEAWNTTTTTQTQTPHRPSLLHPTFYWGYNCQVLFSGWPGSDRGMYALALIFVFFLAFLAEWLARCSDASSIKQGADKLAKVAFRTAMYTVKSGFSYLVILAVVSFNGGVFLAAIFGHALGFAVFRGRAFRNRDIQ</sequence>
<name>COPT4_ARATH</name>
<feature type="chain" id="PRO_0000399995" description="Copper transporter 4">
    <location>
        <begin position="1"/>
        <end position="145"/>
    </location>
</feature>
<feature type="transmembrane region" description="Helical" evidence="2">
    <location>
        <begin position="53"/>
        <end position="73"/>
    </location>
</feature>
<feature type="transmembrane region" description="Helical" evidence="2">
    <location>
        <begin position="106"/>
        <end position="126"/>
    </location>
</feature>
<feature type="sequence conflict" description="In Ref. 1; AAL74264." evidence="5" ref="1">
    <original>A</original>
    <variation>T</variation>
    <location>
        <position position="111"/>
    </location>
</feature>
<protein>
    <recommendedName>
        <fullName>Copper transporter 4</fullName>
        <shortName>AtCOPT4</shortName>
    </recommendedName>
</protein>
<organism>
    <name type="scientific">Arabidopsis thaliana</name>
    <name type="common">Mouse-ear cress</name>
    <dbReference type="NCBI Taxonomy" id="3702"/>
    <lineage>
        <taxon>Eukaryota</taxon>
        <taxon>Viridiplantae</taxon>
        <taxon>Streptophyta</taxon>
        <taxon>Embryophyta</taxon>
        <taxon>Tracheophyta</taxon>
        <taxon>Spermatophyta</taxon>
        <taxon>Magnoliopsida</taxon>
        <taxon>eudicotyledons</taxon>
        <taxon>Gunneridae</taxon>
        <taxon>Pentapetalae</taxon>
        <taxon>rosids</taxon>
        <taxon>malvids</taxon>
        <taxon>Brassicales</taxon>
        <taxon>Brassicaceae</taxon>
        <taxon>Camelineae</taxon>
        <taxon>Arabidopsis</taxon>
    </lineage>
</organism>
<comment type="function">
    <text evidence="1">Involved in the transport of copper.</text>
</comment>
<comment type="subcellular location">
    <subcellularLocation>
        <location evidence="5">Membrane</location>
        <topology evidence="5">Multi-pass membrane protein</topology>
    </subcellularLocation>
</comment>
<comment type="tissue specificity">
    <text evidence="3">Highly expressed in roots and at lower levels in leaves, stems and flowers.</text>
</comment>
<comment type="induction">
    <text evidence="4">Down-regulated by treatment with high concentrations of copper.</text>
</comment>
<comment type="similarity">
    <text evidence="5">Belongs to the copper transporter (Ctr) (TC 1.A.56) family. SLC31A subfamily.</text>
</comment>
<proteinExistence type="evidence at transcript level"/>
<accession>Q8SAA5</accession>
<reference key="1">
    <citation type="journal article" date="2003" name="Plant Mol. Biol.">
        <title>Identification of a copper transporter family in Arabidopsis thaliana.</title>
        <authorList>
            <person name="Sancenon V."/>
            <person name="Puig S."/>
            <person name="Mira H."/>
            <person name="Thiele D.J."/>
            <person name="Penarrubia L."/>
        </authorList>
    </citation>
    <scope>NUCLEOTIDE SEQUENCE [MRNA]</scope>
    <scope>TISSUE SPECIFICITY</scope>
    <scope>GENE FAMILY</scope>
    <scope>NOMENCLATURE</scope>
</reference>
<reference key="2">
    <citation type="journal article" date="1999" name="Nature">
        <title>Sequence and analysis of chromosome 2 of the plant Arabidopsis thaliana.</title>
        <authorList>
            <person name="Lin X."/>
            <person name="Kaul S."/>
            <person name="Rounsley S.D."/>
            <person name="Shea T.P."/>
            <person name="Benito M.-I."/>
            <person name="Town C.D."/>
            <person name="Fujii C.Y."/>
            <person name="Mason T.M."/>
            <person name="Bowman C.L."/>
            <person name="Barnstead M.E."/>
            <person name="Feldblyum T.V."/>
            <person name="Buell C.R."/>
            <person name="Ketchum K.A."/>
            <person name="Lee J.J."/>
            <person name="Ronning C.M."/>
            <person name="Koo H.L."/>
            <person name="Moffat K.S."/>
            <person name="Cronin L.A."/>
            <person name="Shen M."/>
            <person name="Pai G."/>
            <person name="Van Aken S."/>
            <person name="Umayam L."/>
            <person name="Tallon L.J."/>
            <person name="Gill J.E."/>
            <person name="Adams M.D."/>
            <person name="Carrera A.J."/>
            <person name="Creasy T.H."/>
            <person name="Goodman H.M."/>
            <person name="Somerville C.R."/>
            <person name="Copenhaver G.P."/>
            <person name="Preuss D."/>
            <person name="Nierman W.C."/>
            <person name="White O."/>
            <person name="Eisen J.A."/>
            <person name="Salzberg S.L."/>
            <person name="Fraser C.M."/>
            <person name="Venter J.C."/>
        </authorList>
    </citation>
    <scope>NUCLEOTIDE SEQUENCE [LARGE SCALE GENOMIC DNA]</scope>
    <source>
        <strain>cv. Columbia</strain>
    </source>
</reference>
<reference key="3">
    <citation type="journal article" date="2017" name="Plant J.">
        <title>Araport11: a complete reannotation of the Arabidopsis thaliana reference genome.</title>
        <authorList>
            <person name="Cheng C.Y."/>
            <person name="Krishnakumar V."/>
            <person name="Chan A.P."/>
            <person name="Thibaud-Nissen F."/>
            <person name="Schobel S."/>
            <person name="Town C.D."/>
        </authorList>
    </citation>
    <scope>GENOME REANNOTATION</scope>
    <source>
        <strain>cv. Columbia</strain>
    </source>
</reference>
<reference key="4">
    <citation type="journal article" date="2010" name="Biochem. Biophys. Res. Commun.">
        <title>Gene expression profiling analysis of copper homeostasis in Arabidopsis thaliana.</title>
        <authorList>
            <person name="del Pozo T."/>
            <person name="Cambiazo V."/>
            <person name="Gonzalez M."/>
        </authorList>
    </citation>
    <scope>INDUCTION</scope>
</reference>
<gene>
    <name type="primary">COPT4</name>
    <name type="ordered locus">At2g37925</name>
    <name type="ORF">T8P21.17</name>
</gene>
<dbReference type="EMBL" id="AF466372">
    <property type="protein sequence ID" value="AAL74264.1"/>
    <property type="molecule type" value="mRNA"/>
</dbReference>
<dbReference type="EMBL" id="CP002685">
    <property type="protein sequence ID" value="AEC09466.1"/>
    <property type="molecule type" value="Genomic_DNA"/>
</dbReference>
<dbReference type="RefSeq" id="NP_850289.1">
    <property type="nucleotide sequence ID" value="NM_179958.2"/>
</dbReference>
<dbReference type="SMR" id="Q8SAA5"/>
<dbReference type="FunCoup" id="Q8SAA5">
    <property type="interactions" value="1085"/>
</dbReference>
<dbReference type="STRING" id="3702.Q8SAA5"/>
<dbReference type="PaxDb" id="3702-AT2G37925.1"/>
<dbReference type="EnsemblPlants" id="AT2G37925.1">
    <property type="protein sequence ID" value="AT2G37925.1"/>
    <property type="gene ID" value="AT2G37925"/>
</dbReference>
<dbReference type="GeneID" id="818369"/>
<dbReference type="Gramene" id="AT2G37925.1">
    <property type="protein sequence ID" value="AT2G37925.1"/>
    <property type="gene ID" value="AT2G37925"/>
</dbReference>
<dbReference type="KEGG" id="ath:AT2G37925"/>
<dbReference type="Araport" id="AT2G37925"/>
<dbReference type="TAIR" id="AT2G37925">
    <property type="gene designation" value="COPT4"/>
</dbReference>
<dbReference type="eggNOG" id="KOG3386">
    <property type="taxonomic scope" value="Eukaryota"/>
</dbReference>
<dbReference type="HOGENOM" id="CLU_079690_1_2_1"/>
<dbReference type="InParanoid" id="Q8SAA5"/>
<dbReference type="OMA" id="LPMAWTN"/>
<dbReference type="OrthoDB" id="73901at2759"/>
<dbReference type="PhylomeDB" id="Q8SAA5"/>
<dbReference type="PRO" id="PR:Q8SAA5"/>
<dbReference type="Proteomes" id="UP000006548">
    <property type="component" value="Chromosome 2"/>
</dbReference>
<dbReference type="ExpressionAtlas" id="Q8SAA5">
    <property type="expression patterns" value="baseline and differential"/>
</dbReference>
<dbReference type="GO" id="GO:0016020">
    <property type="term" value="C:membrane"/>
    <property type="evidence" value="ECO:0007669"/>
    <property type="project" value="UniProtKB-SubCell"/>
</dbReference>
<dbReference type="GO" id="GO:0005375">
    <property type="term" value="F:copper ion transmembrane transporter activity"/>
    <property type="evidence" value="ECO:0007669"/>
    <property type="project" value="InterPro"/>
</dbReference>
<dbReference type="InterPro" id="IPR007274">
    <property type="entry name" value="Cop_transporter"/>
</dbReference>
<dbReference type="PANTHER" id="PTHR12483:SF94">
    <property type="entry name" value="COPPER TRANSPORTER 4"/>
    <property type="match status" value="1"/>
</dbReference>
<dbReference type="PANTHER" id="PTHR12483">
    <property type="entry name" value="SOLUTE CARRIER FAMILY 31 COPPER TRANSPORTERS"/>
    <property type="match status" value="1"/>
</dbReference>
<dbReference type="Pfam" id="PF04145">
    <property type="entry name" value="Ctr"/>
    <property type="match status" value="2"/>
</dbReference>
<evidence type="ECO:0000250" key="1"/>
<evidence type="ECO:0000255" key="2"/>
<evidence type="ECO:0000269" key="3">
    <source>
    </source>
</evidence>
<evidence type="ECO:0000269" key="4">
    <source>
    </source>
</evidence>
<evidence type="ECO:0000305" key="5"/>